<dbReference type="EC" id="5.3.1.1" evidence="1"/>
<dbReference type="EMBL" id="CP000061">
    <property type="protein sequence ID" value="ABC65666.1"/>
    <property type="molecule type" value="Genomic_DNA"/>
</dbReference>
<dbReference type="RefSeq" id="WP_011412828.1">
    <property type="nucleotide sequence ID" value="NC_007716.1"/>
</dbReference>
<dbReference type="SMR" id="Q2NIS7"/>
<dbReference type="STRING" id="322098.AYWB_549"/>
<dbReference type="KEGG" id="ayw:AYWB_549"/>
<dbReference type="eggNOG" id="COG0149">
    <property type="taxonomic scope" value="Bacteria"/>
</dbReference>
<dbReference type="HOGENOM" id="CLU_024251_2_3_14"/>
<dbReference type="OrthoDB" id="9809429at2"/>
<dbReference type="PhylomeDB" id="Q2NIS7"/>
<dbReference type="UniPathway" id="UPA00109">
    <property type="reaction ID" value="UER00189"/>
</dbReference>
<dbReference type="UniPathway" id="UPA00138"/>
<dbReference type="Proteomes" id="UP000001934">
    <property type="component" value="Chromosome"/>
</dbReference>
<dbReference type="GO" id="GO:0005829">
    <property type="term" value="C:cytosol"/>
    <property type="evidence" value="ECO:0007669"/>
    <property type="project" value="TreeGrafter"/>
</dbReference>
<dbReference type="GO" id="GO:0004807">
    <property type="term" value="F:triose-phosphate isomerase activity"/>
    <property type="evidence" value="ECO:0007669"/>
    <property type="project" value="UniProtKB-UniRule"/>
</dbReference>
<dbReference type="GO" id="GO:0006094">
    <property type="term" value="P:gluconeogenesis"/>
    <property type="evidence" value="ECO:0007669"/>
    <property type="project" value="UniProtKB-UniRule"/>
</dbReference>
<dbReference type="GO" id="GO:0046166">
    <property type="term" value="P:glyceraldehyde-3-phosphate biosynthetic process"/>
    <property type="evidence" value="ECO:0007669"/>
    <property type="project" value="TreeGrafter"/>
</dbReference>
<dbReference type="GO" id="GO:0019563">
    <property type="term" value="P:glycerol catabolic process"/>
    <property type="evidence" value="ECO:0007669"/>
    <property type="project" value="TreeGrafter"/>
</dbReference>
<dbReference type="GO" id="GO:0006096">
    <property type="term" value="P:glycolytic process"/>
    <property type="evidence" value="ECO:0007669"/>
    <property type="project" value="UniProtKB-UniRule"/>
</dbReference>
<dbReference type="CDD" id="cd00311">
    <property type="entry name" value="TIM"/>
    <property type="match status" value="1"/>
</dbReference>
<dbReference type="FunFam" id="3.20.20.70:FF:000016">
    <property type="entry name" value="Triosephosphate isomerase"/>
    <property type="match status" value="1"/>
</dbReference>
<dbReference type="Gene3D" id="3.20.20.70">
    <property type="entry name" value="Aldolase class I"/>
    <property type="match status" value="1"/>
</dbReference>
<dbReference type="HAMAP" id="MF_00147_B">
    <property type="entry name" value="TIM_B"/>
    <property type="match status" value="1"/>
</dbReference>
<dbReference type="InterPro" id="IPR013785">
    <property type="entry name" value="Aldolase_TIM"/>
</dbReference>
<dbReference type="InterPro" id="IPR035990">
    <property type="entry name" value="TIM_sf"/>
</dbReference>
<dbReference type="InterPro" id="IPR022896">
    <property type="entry name" value="TrioseP_Isoase_bac/euk"/>
</dbReference>
<dbReference type="InterPro" id="IPR000652">
    <property type="entry name" value="Triosephosphate_isomerase"/>
</dbReference>
<dbReference type="InterPro" id="IPR020861">
    <property type="entry name" value="Triosephosphate_isomerase_AS"/>
</dbReference>
<dbReference type="NCBIfam" id="TIGR00419">
    <property type="entry name" value="tim"/>
    <property type="match status" value="1"/>
</dbReference>
<dbReference type="PANTHER" id="PTHR21139">
    <property type="entry name" value="TRIOSEPHOSPHATE ISOMERASE"/>
    <property type="match status" value="1"/>
</dbReference>
<dbReference type="PANTHER" id="PTHR21139:SF42">
    <property type="entry name" value="TRIOSEPHOSPHATE ISOMERASE"/>
    <property type="match status" value="1"/>
</dbReference>
<dbReference type="Pfam" id="PF00121">
    <property type="entry name" value="TIM"/>
    <property type="match status" value="1"/>
</dbReference>
<dbReference type="SUPFAM" id="SSF51351">
    <property type="entry name" value="Triosephosphate isomerase (TIM)"/>
    <property type="match status" value="1"/>
</dbReference>
<dbReference type="PROSITE" id="PS00171">
    <property type="entry name" value="TIM_1"/>
    <property type="match status" value="1"/>
</dbReference>
<dbReference type="PROSITE" id="PS51440">
    <property type="entry name" value="TIM_2"/>
    <property type="match status" value="1"/>
</dbReference>
<evidence type="ECO:0000255" key="1">
    <source>
        <dbReference type="HAMAP-Rule" id="MF_00147"/>
    </source>
</evidence>
<sequence>MNYKPRTKVIAGNWKMHKCKDEALEFIQKVSLQVPDQTQVQTLIFPQLTLLDPLVQLQGANLQVGAQNMFYETEGAFTGEVSPQNLLSLGVKHVLLGHSERRTLFGETDQTVNLKLLSALKHKLVPTVCVGESLLTKENNQTQMFLDQQLTNIFAGVPEEALKNMIIAYEPVWAIGTGKSANPQDANKTIEQIREKVTALYSFQASCAIRIIYGGSLSVANIKSILEQPAIDGILAGKASLQTEDFLFFAQIASKQVLVSTKDIFQKNDCPFCY</sequence>
<feature type="chain" id="PRO_1000009838" description="Triosephosphate isomerase">
    <location>
        <begin position="1"/>
        <end position="274"/>
    </location>
</feature>
<feature type="active site" description="Electrophile" evidence="1">
    <location>
        <position position="98"/>
    </location>
</feature>
<feature type="active site" description="Proton acceptor" evidence="1">
    <location>
        <position position="170"/>
    </location>
</feature>
<feature type="binding site" evidence="1">
    <location>
        <begin position="13"/>
        <end position="15"/>
    </location>
    <ligand>
        <name>substrate</name>
    </ligand>
</feature>
<feature type="binding site" evidence="1">
    <location>
        <position position="176"/>
    </location>
    <ligand>
        <name>substrate</name>
    </ligand>
</feature>
<feature type="binding site" evidence="1">
    <location>
        <position position="216"/>
    </location>
    <ligand>
        <name>substrate</name>
    </ligand>
</feature>
<proteinExistence type="inferred from homology"/>
<keyword id="KW-0963">Cytoplasm</keyword>
<keyword id="KW-0312">Gluconeogenesis</keyword>
<keyword id="KW-0324">Glycolysis</keyword>
<keyword id="KW-0413">Isomerase</keyword>
<accession>Q2NIS7</accession>
<name>TPIS_AYWBP</name>
<protein>
    <recommendedName>
        <fullName evidence="1">Triosephosphate isomerase</fullName>
        <shortName evidence="1">TIM</shortName>
        <shortName evidence="1">TPI</shortName>
        <ecNumber evidence="1">5.3.1.1</ecNumber>
    </recommendedName>
    <alternativeName>
        <fullName evidence="1">Triose-phosphate isomerase</fullName>
    </alternativeName>
</protein>
<reference key="1">
    <citation type="journal article" date="2006" name="J. Bacteriol.">
        <title>Living with genome instability: the adaptation of phytoplasmas to diverse environments of their insect and plant hosts.</title>
        <authorList>
            <person name="Bai X."/>
            <person name="Zhang J."/>
            <person name="Ewing A."/>
            <person name="Miller S.A."/>
            <person name="Jancso Radek A."/>
            <person name="Shevchenko D.V."/>
            <person name="Tsukerman K."/>
            <person name="Walunas T."/>
            <person name="Lapidus A."/>
            <person name="Campbell J.W."/>
            <person name="Hogenhout S.A."/>
        </authorList>
    </citation>
    <scope>NUCLEOTIDE SEQUENCE [LARGE SCALE GENOMIC DNA]</scope>
    <source>
        <strain>AYWB</strain>
    </source>
</reference>
<organism>
    <name type="scientific">Aster yellows witches'-broom phytoplasma (strain AYWB)</name>
    <dbReference type="NCBI Taxonomy" id="322098"/>
    <lineage>
        <taxon>Bacteria</taxon>
        <taxon>Bacillati</taxon>
        <taxon>Mycoplasmatota</taxon>
        <taxon>Mollicutes</taxon>
        <taxon>Acholeplasmatales</taxon>
        <taxon>Acholeplasmataceae</taxon>
        <taxon>Candidatus Phytoplasma</taxon>
        <taxon>16SrI (Aster yellows group)</taxon>
    </lineage>
</organism>
<gene>
    <name evidence="1" type="primary">tpiA</name>
    <name type="ordered locus">AYWB_549</name>
</gene>
<comment type="function">
    <text evidence="1">Involved in the gluconeogenesis. Catalyzes stereospecifically the conversion of dihydroxyacetone phosphate (DHAP) to D-glyceraldehyde-3-phosphate (G3P).</text>
</comment>
<comment type="catalytic activity">
    <reaction evidence="1">
        <text>D-glyceraldehyde 3-phosphate = dihydroxyacetone phosphate</text>
        <dbReference type="Rhea" id="RHEA:18585"/>
        <dbReference type="ChEBI" id="CHEBI:57642"/>
        <dbReference type="ChEBI" id="CHEBI:59776"/>
        <dbReference type="EC" id="5.3.1.1"/>
    </reaction>
</comment>
<comment type="pathway">
    <text evidence="1">Carbohydrate biosynthesis; gluconeogenesis.</text>
</comment>
<comment type="pathway">
    <text evidence="1">Carbohydrate degradation; glycolysis; D-glyceraldehyde 3-phosphate from glycerone phosphate: step 1/1.</text>
</comment>
<comment type="subunit">
    <text evidence="1">Homodimer.</text>
</comment>
<comment type="subcellular location">
    <subcellularLocation>
        <location evidence="1">Cytoplasm</location>
    </subcellularLocation>
</comment>
<comment type="similarity">
    <text evidence="1">Belongs to the triosephosphate isomerase family.</text>
</comment>